<dbReference type="EMBL" id="M83112">
    <property type="protein sequence ID" value="AAA26807.1"/>
    <property type="molecule type" value="Genomic_DNA"/>
</dbReference>
<dbReference type="PIR" id="JC1203">
    <property type="entry name" value="JC1203"/>
</dbReference>
<dbReference type="RefSeq" id="WP_015659252.1">
    <property type="nucleotide sequence ID" value="NZ_JOAU01000002.1"/>
</dbReference>
<dbReference type="SMR" id="P25820"/>
<dbReference type="GeneID" id="95660322"/>
<dbReference type="GO" id="GO:1990904">
    <property type="term" value="C:ribonucleoprotein complex"/>
    <property type="evidence" value="ECO:0007669"/>
    <property type="project" value="UniProtKB-KW"/>
</dbReference>
<dbReference type="GO" id="GO:0005840">
    <property type="term" value="C:ribosome"/>
    <property type="evidence" value="ECO:0007669"/>
    <property type="project" value="UniProtKB-KW"/>
</dbReference>
<dbReference type="GO" id="GO:0003735">
    <property type="term" value="F:structural constituent of ribosome"/>
    <property type="evidence" value="ECO:0007669"/>
    <property type="project" value="InterPro"/>
</dbReference>
<dbReference type="GO" id="GO:0006412">
    <property type="term" value="P:translation"/>
    <property type="evidence" value="ECO:0007669"/>
    <property type="project" value="UniProtKB-UniRule"/>
</dbReference>
<dbReference type="FunFam" id="1.10.287.3980:FF:000001">
    <property type="entry name" value="Mitochondrial ribosomal protein L34"/>
    <property type="match status" value="1"/>
</dbReference>
<dbReference type="Gene3D" id="1.10.287.3980">
    <property type="match status" value="1"/>
</dbReference>
<dbReference type="HAMAP" id="MF_00391">
    <property type="entry name" value="Ribosomal_bL34"/>
    <property type="match status" value="1"/>
</dbReference>
<dbReference type="InterPro" id="IPR000271">
    <property type="entry name" value="Ribosomal_bL34"/>
</dbReference>
<dbReference type="InterPro" id="IPR020939">
    <property type="entry name" value="Ribosomal_bL34_CS"/>
</dbReference>
<dbReference type="NCBIfam" id="TIGR01030">
    <property type="entry name" value="rpmH_bact"/>
    <property type="match status" value="1"/>
</dbReference>
<dbReference type="PANTHER" id="PTHR14503:SF4">
    <property type="entry name" value="LARGE RIBOSOMAL SUBUNIT PROTEIN BL34M"/>
    <property type="match status" value="1"/>
</dbReference>
<dbReference type="PANTHER" id="PTHR14503">
    <property type="entry name" value="MITOCHONDRIAL RIBOSOMAL PROTEIN 34 FAMILY MEMBER"/>
    <property type="match status" value="1"/>
</dbReference>
<dbReference type="Pfam" id="PF00468">
    <property type="entry name" value="Ribosomal_L34"/>
    <property type="match status" value="1"/>
</dbReference>
<dbReference type="PROSITE" id="PS00784">
    <property type="entry name" value="RIBOSOMAL_L34"/>
    <property type="match status" value="1"/>
</dbReference>
<feature type="chain" id="PRO_0000187471" description="Large ribosomal subunit protein bL34">
    <location>
        <begin position="1"/>
        <end position="45"/>
    </location>
</feature>
<protein>
    <recommendedName>
        <fullName evidence="1">Large ribosomal subunit protein bL34</fullName>
    </recommendedName>
    <alternativeName>
        <fullName>50S ribosomal protein L34</fullName>
    </alternativeName>
</protein>
<organism>
    <name type="scientific">Streptomyces bikiniensis</name>
    <dbReference type="NCBI Taxonomy" id="1896"/>
    <lineage>
        <taxon>Bacteria</taxon>
        <taxon>Bacillati</taxon>
        <taxon>Actinomycetota</taxon>
        <taxon>Actinomycetes</taxon>
        <taxon>Kitasatosporales</taxon>
        <taxon>Streptomycetaceae</taxon>
        <taxon>Streptomyces</taxon>
    </lineage>
</organism>
<keyword id="KW-0687">Ribonucleoprotein</keyword>
<keyword id="KW-0689">Ribosomal protein</keyword>
<sequence>MSKRTFQPNNRRRAKTHGFRLRMRTRAGRAILANRRAKGRASLSA</sequence>
<evidence type="ECO:0000305" key="1"/>
<gene>
    <name type="primary">rpmH</name>
</gene>
<reference key="1">
    <citation type="journal article" date="1992" name="Gene">
        <title>Sequences encoding the protein and RNA components of ribonuclease P from Streptomyces bikiniensis var. zorbonensis.</title>
        <authorList>
            <person name="Morse D.P."/>
            <person name="Schmidt F.J."/>
        </authorList>
    </citation>
    <scope>NUCLEOTIDE SEQUENCE [GENOMIC DNA]</scope>
    <source>
        <strain>Var. Zorbonensis</strain>
    </source>
</reference>
<comment type="similarity">
    <text evidence="1">Belongs to the bacterial ribosomal protein bL34 family.</text>
</comment>
<accession>P25820</accession>
<name>RL34_STRBI</name>
<proteinExistence type="inferred from homology"/>